<sequence>MGFTVVSRSGSPTRRENQKRRVCFRLLLRLLRRGFVVLSAESDPKMPNYSIRGINVEFPFEAYQSQIIYMDRVIESLQNKCHALLESPTGTGKTLCLLCATLAWRKSLGSFSTRKDRKNSAIPWSDSDEPLSQSGGGGGGAFPTIVYASRTHSQLRQVIKELKRSSYRPKMVVLGSREQLCVNEEVNSLRGKALTNACQYLCKKRGKRQCNHFNRLPDYLKHNPHIGDEPVDIEDLVNIGKDSGPCPYYITRELHKDVDIIFAPYNYLISNGYRKFLKVNWTNSVLIFDEAHNLESLCADSASFDLPSVLLSACISEAQECVQLAAARRDSLNDVSINPENFAILKGLLLKLQELISKVPIPKRDEGFTKPGPYIYEMLKSLNITHETAPKLIGTVEEAAVFLEEEKQRTATNAGSKLEIIADMLKLIFRENGSNHADVYRVHVQELEQNSTDVMKGKVSRTLSWWCFSPGITMLDIAQKGVGSIILTSGTLSPMDSLAQELKLDFPIRLENPHVISSNQLWAGVVSTGPSGYVLNSSYRNRDVPEYKQELGNAIVNFSRVVPEGLLIFFPSYYLMDSCITFWKNGCYRNSMTVWERICKLKKPVIEPKDSSLFPAAMRDFSEKLQDRATSGVVFFAVCRGKVSEGLDFADGAGRAVVITGLPYARVTDPRVKLKREFLDEQSQLADVKLPRSTLLSGSMWYSQEAARAVNQAIGRVIRHRHDYGAIIFCDDRFEQPSQQSKISLWIRPNVKCYSRYGEVISDLARFFRTERSNFPARLVTEQENNIVSTLLPVESIEDNPTPAFGNSNLKNVGVAQNELSRLEAFPPANRASPLERDGNNVKRNGLTILKHTGKIPRIVKGDVMQGCSSRKAKLVELSDDEETPVERRCEVVDLESDNCETQTCVTEVLASSTCLNTMGLKKKRKVPESQGSASSSVLTAKGNGGGDKKEASASAFLSQVKEKLNTEEYKKFIGYMQALKKKEIKLANVMQSIVQLFCGSERDHLLMGFKDFVPVKYRPAYEECIKTRKRQSIIFGNSN</sequence>
<name>RTEL1_ARATH</name>
<evidence type="ECO:0000255" key="1">
    <source>
        <dbReference type="PROSITE-ProRule" id="PRU00541"/>
    </source>
</evidence>
<evidence type="ECO:0000256" key="2">
    <source>
        <dbReference type="SAM" id="MobiDB-lite"/>
    </source>
</evidence>
<evidence type="ECO:0000269" key="3">
    <source>
    </source>
</evidence>
<evidence type="ECO:0000269" key="4">
    <source>
    </source>
</evidence>
<evidence type="ECO:0000269" key="5">
    <source>
    </source>
</evidence>
<evidence type="ECO:0000303" key="6">
    <source>
    </source>
</evidence>
<evidence type="ECO:0000303" key="7">
    <source>
    </source>
</evidence>
<evidence type="ECO:0000305" key="8"/>
<evidence type="ECO:0000305" key="9">
    <source>
    </source>
</evidence>
<evidence type="ECO:0000312" key="10">
    <source>
        <dbReference type="Araport" id="AT1G79950"/>
    </source>
</evidence>
<evidence type="ECO:0000312" key="11">
    <source>
        <dbReference type="EMBL" id="AAD55463.1"/>
    </source>
</evidence>
<evidence type="ECO:0000312" key="12">
    <source>
        <dbReference type="EMBL" id="AAG52242.1"/>
    </source>
</evidence>
<protein>
    <recommendedName>
        <fullName evidence="6 7">Regulator of telomere elongation helicase 1 homolog</fullName>
        <ecNumber evidence="8">5.6.2.-</ecNumber>
    </recommendedName>
</protein>
<comment type="function">
    <text evidence="3 4 5">A probable ATP-dependent DNA helicase implicated in DNA replication, DNA repair and the maintenance of genomic stability. Acts as an anti-recombinase to counteract toxic recombination and limit crossover during meiosis. Regulates meiotic recombination and crossover homeostasis by physically dissociating strand invasion events and thereby promotes noncrossover repair by meiotic synthesis dependent strand annealing (SDSA) as well as disassembly of D loop recombination intermediates (PubMed:25516598, PubMed:25595823). Also plays a role in preserving the stability of 45S rDNA repeats (PubMed:27760121).</text>
</comment>
<comment type="catalytic activity">
    <reaction evidence="8">
        <text>ATP + H2O = ADP + phosphate + H(+)</text>
        <dbReference type="Rhea" id="RHEA:13065"/>
        <dbReference type="ChEBI" id="CHEBI:15377"/>
        <dbReference type="ChEBI" id="CHEBI:15378"/>
        <dbReference type="ChEBI" id="CHEBI:30616"/>
        <dbReference type="ChEBI" id="CHEBI:43474"/>
        <dbReference type="ChEBI" id="CHEBI:456216"/>
    </reaction>
</comment>
<comment type="subcellular location">
    <subcellularLocation>
        <location evidence="8">Nucleus</location>
    </subcellularLocation>
</comment>
<comment type="domain">
    <text evidence="8">The PIP-box (PCNA interacting peptide) motif mediates the interaction with PCNA and localization to replication foci.</text>
</comment>
<comment type="disruption phenotype">
    <text evidence="3 4 5">Increased homologous recombination and replication defects (PubMed:25516598, PubMed:25595823). Growth inhibition due to defective cell proliferation. Hypersensitivity to DNA cross-link agents (PubMed:25595823). Loss of 45S rDNA repeats (PubMed:27760121).</text>
</comment>
<comment type="similarity">
    <text evidence="8">Belongs to the helicase family. RAD3/XPD subfamily.</text>
</comment>
<comment type="sequence caution" evidence="8">
    <conflict type="erroneous gene model prediction">
        <sequence resource="EMBL-CDS" id="AAD55463"/>
    </conflict>
</comment>
<comment type="sequence caution" evidence="8">
    <conflict type="erroneous gene model prediction">
        <sequence resource="EMBL-CDS" id="AAG52242"/>
    </conflict>
</comment>
<organism>
    <name type="scientific">Arabidopsis thaliana</name>
    <name type="common">Mouse-ear cress</name>
    <dbReference type="NCBI Taxonomy" id="3702"/>
    <lineage>
        <taxon>Eukaryota</taxon>
        <taxon>Viridiplantae</taxon>
        <taxon>Streptophyta</taxon>
        <taxon>Embryophyta</taxon>
        <taxon>Tracheophyta</taxon>
        <taxon>Spermatophyta</taxon>
        <taxon>Magnoliopsida</taxon>
        <taxon>eudicotyledons</taxon>
        <taxon>Gunneridae</taxon>
        <taxon>Pentapetalae</taxon>
        <taxon>rosids</taxon>
        <taxon>malvids</taxon>
        <taxon>Brassicales</taxon>
        <taxon>Brassicaceae</taxon>
        <taxon>Camelineae</taxon>
        <taxon>Arabidopsis</taxon>
    </lineage>
</organism>
<accession>F4HQE2</accession>
<accession>Q9CA97</accession>
<accession>Q9SSD8</accession>
<feature type="chain" id="PRO_0000442765" description="Regulator of telomere elongation helicase 1 homolog">
    <location>
        <begin position="1"/>
        <end position="1040"/>
    </location>
</feature>
<feature type="domain" description="Helicase ATP-binding" evidence="1">
    <location>
        <begin position="52"/>
        <end position="355"/>
    </location>
</feature>
<feature type="region of interest" description="Disordered" evidence="2">
    <location>
        <begin position="117"/>
        <end position="137"/>
    </location>
</feature>
<feature type="region of interest" description="Disordered" evidence="2">
    <location>
        <begin position="926"/>
        <end position="949"/>
    </location>
</feature>
<feature type="short sequence motif" description="DEAH box" evidence="1">
    <location>
        <begin position="289"/>
        <end position="292"/>
    </location>
</feature>
<feature type="short sequence motif" description="PIP-box; degenerate" evidence="9">
    <location>
        <begin position="992"/>
        <end position="999"/>
    </location>
</feature>
<feature type="compositionally biased region" description="Polar residues" evidence="2">
    <location>
        <begin position="930"/>
        <end position="939"/>
    </location>
</feature>
<feature type="binding site" evidence="1">
    <location>
        <begin position="87"/>
        <end position="94"/>
    </location>
    <ligand>
        <name>ATP</name>
        <dbReference type="ChEBI" id="CHEBI:30616"/>
    </ligand>
</feature>
<feature type="binding site" evidence="8">
    <location>
        <position position="181"/>
    </location>
    <ligand>
        <name>[4Fe-4S] cluster</name>
        <dbReference type="ChEBI" id="CHEBI:49883"/>
    </ligand>
</feature>
<feature type="binding site" evidence="8">
    <location>
        <position position="202"/>
    </location>
    <ligand>
        <name>[4Fe-4S] cluster</name>
        <dbReference type="ChEBI" id="CHEBI:49883"/>
    </ligand>
</feature>
<feature type="binding site" evidence="8">
    <location>
        <position position="210"/>
    </location>
    <ligand>
        <name>[4Fe-4S] cluster</name>
        <dbReference type="ChEBI" id="CHEBI:49883"/>
    </ligand>
</feature>
<feature type="binding site" evidence="8">
    <location>
        <position position="246"/>
    </location>
    <ligand>
        <name>[4Fe-4S] cluster</name>
        <dbReference type="ChEBI" id="CHEBI:49883"/>
    </ligand>
</feature>
<proteinExistence type="inferred from homology"/>
<keyword id="KW-0004">4Fe-4S</keyword>
<keyword id="KW-0067">ATP-binding</keyword>
<keyword id="KW-0227">DNA damage</keyword>
<keyword id="KW-0234">DNA repair</keyword>
<keyword id="KW-0235">DNA replication</keyword>
<keyword id="KW-0238">DNA-binding</keyword>
<keyword id="KW-0347">Helicase</keyword>
<keyword id="KW-0378">Hydrolase</keyword>
<keyword id="KW-0408">Iron</keyword>
<keyword id="KW-0411">Iron-sulfur</keyword>
<keyword id="KW-0413">Isomerase</keyword>
<keyword id="KW-0479">Metal-binding</keyword>
<keyword id="KW-0547">Nucleotide-binding</keyword>
<keyword id="KW-0539">Nucleus</keyword>
<keyword id="KW-1185">Reference proteome</keyword>
<gene>
    <name evidence="6 7" type="primary">RTEL1</name>
    <name evidence="10" type="ordered locus">At1g79950</name>
    <name evidence="11" type="ORF">F18B13.3</name>
    <name evidence="12" type="ORF">F19K16.9</name>
</gene>
<dbReference type="EC" id="5.6.2.-" evidence="8"/>
<dbReference type="EMBL" id="AC009322">
    <property type="protein sequence ID" value="AAD55463.1"/>
    <property type="status" value="ALT_SEQ"/>
    <property type="molecule type" value="Genomic_DNA"/>
</dbReference>
<dbReference type="EMBL" id="AC011717">
    <property type="protein sequence ID" value="AAG52242.1"/>
    <property type="status" value="ALT_SEQ"/>
    <property type="molecule type" value="Genomic_DNA"/>
</dbReference>
<dbReference type="EMBL" id="CP002684">
    <property type="protein sequence ID" value="AEE36333.1"/>
    <property type="molecule type" value="Genomic_DNA"/>
</dbReference>
<dbReference type="PIR" id="G96830">
    <property type="entry name" value="G96830"/>
</dbReference>
<dbReference type="RefSeq" id="NP_178113.3">
    <property type="nucleotide sequence ID" value="NM_106644.4"/>
</dbReference>
<dbReference type="SMR" id="F4HQE2"/>
<dbReference type="FunCoup" id="F4HQE2">
    <property type="interactions" value="3075"/>
</dbReference>
<dbReference type="STRING" id="3702.F4HQE2"/>
<dbReference type="GlyGen" id="F4HQE2">
    <property type="glycosylation" value="1 site"/>
</dbReference>
<dbReference type="iPTMnet" id="F4HQE2"/>
<dbReference type="PaxDb" id="3702-AT1G79950.1"/>
<dbReference type="ProteomicsDB" id="228028"/>
<dbReference type="EnsemblPlants" id="AT1G79950.1">
    <property type="protein sequence ID" value="AT1G79950.1"/>
    <property type="gene ID" value="AT1G79950"/>
</dbReference>
<dbReference type="GeneID" id="844335"/>
<dbReference type="Gramene" id="AT1G79950.1">
    <property type="protein sequence ID" value="AT1G79950.1"/>
    <property type="gene ID" value="AT1G79950"/>
</dbReference>
<dbReference type="KEGG" id="ath:AT1G79950"/>
<dbReference type="Araport" id="AT1G79950"/>
<dbReference type="TAIR" id="AT1G79950">
    <property type="gene designation" value="RTEL1"/>
</dbReference>
<dbReference type="eggNOG" id="KOG1132">
    <property type="taxonomic scope" value="Eukaryota"/>
</dbReference>
<dbReference type="HOGENOM" id="CLU_006515_4_0_1"/>
<dbReference type="InParanoid" id="F4HQE2"/>
<dbReference type="PRO" id="PR:F4HQE2"/>
<dbReference type="Proteomes" id="UP000006548">
    <property type="component" value="Chromosome 1"/>
</dbReference>
<dbReference type="ExpressionAtlas" id="F4HQE2">
    <property type="expression patterns" value="baseline and differential"/>
</dbReference>
<dbReference type="GO" id="GO:0005739">
    <property type="term" value="C:mitochondrion"/>
    <property type="evidence" value="ECO:0007005"/>
    <property type="project" value="TAIR"/>
</dbReference>
<dbReference type="GO" id="GO:0005634">
    <property type="term" value="C:nucleus"/>
    <property type="evidence" value="ECO:0007669"/>
    <property type="project" value="UniProtKB-SubCell"/>
</dbReference>
<dbReference type="GO" id="GO:0051539">
    <property type="term" value="F:4 iron, 4 sulfur cluster binding"/>
    <property type="evidence" value="ECO:0007669"/>
    <property type="project" value="UniProtKB-KW"/>
</dbReference>
<dbReference type="GO" id="GO:0005524">
    <property type="term" value="F:ATP binding"/>
    <property type="evidence" value="ECO:0007669"/>
    <property type="project" value="UniProtKB-KW"/>
</dbReference>
<dbReference type="GO" id="GO:0016887">
    <property type="term" value="F:ATP hydrolysis activity"/>
    <property type="evidence" value="ECO:0007669"/>
    <property type="project" value="RHEA"/>
</dbReference>
<dbReference type="GO" id="GO:0003677">
    <property type="term" value="F:DNA binding"/>
    <property type="evidence" value="ECO:0007669"/>
    <property type="project" value="UniProtKB-KW"/>
</dbReference>
<dbReference type="GO" id="GO:0003678">
    <property type="term" value="F:DNA helicase activity"/>
    <property type="evidence" value="ECO:0007669"/>
    <property type="project" value="InterPro"/>
</dbReference>
<dbReference type="GO" id="GO:0046872">
    <property type="term" value="F:metal ion binding"/>
    <property type="evidence" value="ECO:0007669"/>
    <property type="project" value="UniProtKB-KW"/>
</dbReference>
<dbReference type="GO" id="GO:0006310">
    <property type="term" value="P:DNA recombination"/>
    <property type="evidence" value="ECO:0000315"/>
    <property type="project" value="UniProtKB"/>
</dbReference>
<dbReference type="GO" id="GO:0006281">
    <property type="term" value="P:DNA repair"/>
    <property type="evidence" value="ECO:0000315"/>
    <property type="project" value="UniProtKB"/>
</dbReference>
<dbReference type="GO" id="GO:0006260">
    <property type="term" value="P:DNA replication"/>
    <property type="evidence" value="ECO:0000315"/>
    <property type="project" value="UniProtKB"/>
</dbReference>
<dbReference type="GO" id="GO:0036297">
    <property type="term" value="P:interstrand cross-link repair"/>
    <property type="evidence" value="ECO:0000315"/>
    <property type="project" value="UniProtKB"/>
</dbReference>
<dbReference type="GO" id="GO:0043007">
    <property type="term" value="P:maintenance of rDNA"/>
    <property type="evidence" value="ECO:0000315"/>
    <property type="project" value="UniProtKB"/>
</dbReference>
<dbReference type="GO" id="GO:0070716">
    <property type="term" value="P:mismatch repair involved in maintenance of fidelity involved in DNA-dependent DNA replication"/>
    <property type="evidence" value="ECO:0000315"/>
    <property type="project" value="UniProtKB"/>
</dbReference>
<dbReference type="GO" id="GO:0045910">
    <property type="term" value="P:negative regulation of DNA recombination"/>
    <property type="evidence" value="ECO:0000315"/>
    <property type="project" value="UniProtKB"/>
</dbReference>
<dbReference type="GO" id="GO:0009555">
    <property type="term" value="P:pollen development"/>
    <property type="evidence" value="ECO:0000316"/>
    <property type="project" value="TAIR"/>
</dbReference>
<dbReference type="GO" id="GO:0000725">
    <property type="term" value="P:recombinational repair"/>
    <property type="evidence" value="ECO:0000315"/>
    <property type="project" value="UniProtKB"/>
</dbReference>
<dbReference type="GO" id="GO:0006355">
    <property type="term" value="P:regulation of DNA-templated transcription"/>
    <property type="evidence" value="ECO:0007669"/>
    <property type="project" value="InterPro"/>
</dbReference>
<dbReference type="GO" id="GO:0010569">
    <property type="term" value="P:regulation of double-strand break repair via homologous recombination"/>
    <property type="evidence" value="ECO:0000315"/>
    <property type="project" value="UniProtKB"/>
</dbReference>
<dbReference type="GO" id="GO:0048364">
    <property type="term" value="P:root development"/>
    <property type="evidence" value="ECO:0000315"/>
    <property type="project" value="TAIR"/>
</dbReference>
<dbReference type="GO" id="GO:0000723">
    <property type="term" value="P:telomere maintenance"/>
    <property type="evidence" value="ECO:0000315"/>
    <property type="project" value="TAIR"/>
</dbReference>
<dbReference type="CDD" id="cd17970">
    <property type="entry name" value="DEAHc_FancJ"/>
    <property type="match status" value="1"/>
</dbReference>
<dbReference type="CDD" id="cd13932">
    <property type="entry name" value="HN_RTEL1"/>
    <property type="match status" value="1"/>
</dbReference>
<dbReference type="CDD" id="cd18788">
    <property type="entry name" value="SF2_C_XPD"/>
    <property type="match status" value="1"/>
</dbReference>
<dbReference type="FunFam" id="3.40.50.300:FF:000431">
    <property type="entry name" value="Regulator of telomere elongation helicase 1"/>
    <property type="match status" value="1"/>
</dbReference>
<dbReference type="FunFam" id="1.20.1160.20:FF:000012">
    <property type="entry name" value="Regulator of telomere elongation helicase 1 homolog"/>
    <property type="match status" value="1"/>
</dbReference>
<dbReference type="Gene3D" id="1.20.1160.20">
    <property type="match status" value="1"/>
</dbReference>
<dbReference type="Gene3D" id="3.40.50.300">
    <property type="entry name" value="P-loop containing nucleotide triphosphate hydrolases"/>
    <property type="match status" value="2"/>
</dbReference>
<dbReference type="InterPro" id="IPR006555">
    <property type="entry name" value="ATP-dep_Helicase_C"/>
</dbReference>
<dbReference type="InterPro" id="IPR045028">
    <property type="entry name" value="DinG/Rad3-like"/>
</dbReference>
<dbReference type="InterPro" id="IPR014013">
    <property type="entry name" value="Helic_SF1/SF2_ATP-bd_DinG/Rad3"/>
</dbReference>
<dbReference type="InterPro" id="IPR006554">
    <property type="entry name" value="Helicase-like_DEXD_c2"/>
</dbReference>
<dbReference type="InterPro" id="IPR014001">
    <property type="entry name" value="Helicase_ATP-bd"/>
</dbReference>
<dbReference type="InterPro" id="IPR049909">
    <property type="entry name" value="HHD_RTEL1"/>
</dbReference>
<dbReference type="InterPro" id="IPR027417">
    <property type="entry name" value="P-loop_NTPase"/>
</dbReference>
<dbReference type="InterPro" id="IPR036600">
    <property type="entry name" value="PAH_sf"/>
</dbReference>
<dbReference type="InterPro" id="IPR010614">
    <property type="entry name" value="RAD3-like_helicase_DEAD"/>
</dbReference>
<dbReference type="InterPro" id="IPR013020">
    <property type="entry name" value="Rad3/Chl1-like"/>
</dbReference>
<dbReference type="NCBIfam" id="TIGR00604">
    <property type="entry name" value="rad3"/>
    <property type="match status" value="1"/>
</dbReference>
<dbReference type="PANTHER" id="PTHR11472">
    <property type="entry name" value="DNA REPAIR DEAD HELICASE RAD3/XP-D SUBFAMILY MEMBER"/>
    <property type="match status" value="1"/>
</dbReference>
<dbReference type="PANTHER" id="PTHR11472:SF34">
    <property type="entry name" value="REGULATOR OF TELOMERE ELONGATION HELICASE 1"/>
    <property type="match status" value="1"/>
</dbReference>
<dbReference type="Pfam" id="PF23109">
    <property type="entry name" value="ARCH_RTEL1"/>
    <property type="match status" value="1"/>
</dbReference>
<dbReference type="Pfam" id="PF06733">
    <property type="entry name" value="DEAD_2"/>
    <property type="match status" value="1"/>
</dbReference>
<dbReference type="Pfam" id="PF13307">
    <property type="entry name" value="Helicase_C_2"/>
    <property type="match status" value="1"/>
</dbReference>
<dbReference type="SMART" id="SM00487">
    <property type="entry name" value="DEXDc"/>
    <property type="match status" value="1"/>
</dbReference>
<dbReference type="SMART" id="SM00488">
    <property type="entry name" value="DEXDc2"/>
    <property type="match status" value="1"/>
</dbReference>
<dbReference type="SMART" id="SM00491">
    <property type="entry name" value="HELICc2"/>
    <property type="match status" value="1"/>
</dbReference>
<dbReference type="SUPFAM" id="SSF52540">
    <property type="entry name" value="P-loop containing nucleoside triphosphate hydrolases"/>
    <property type="match status" value="1"/>
</dbReference>
<dbReference type="SUPFAM" id="SSF47762">
    <property type="entry name" value="PAH2 domain"/>
    <property type="match status" value="1"/>
</dbReference>
<dbReference type="PROSITE" id="PS00690">
    <property type="entry name" value="DEAH_ATP_HELICASE"/>
    <property type="match status" value="1"/>
</dbReference>
<dbReference type="PROSITE" id="PS51193">
    <property type="entry name" value="HELICASE_ATP_BIND_2"/>
    <property type="match status" value="1"/>
</dbReference>
<reference key="1">
    <citation type="journal article" date="2000" name="Nature">
        <title>Sequence and analysis of chromosome 1 of the plant Arabidopsis thaliana.</title>
        <authorList>
            <person name="Theologis A."/>
            <person name="Ecker J.R."/>
            <person name="Palm C.J."/>
            <person name="Federspiel N.A."/>
            <person name="Kaul S."/>
            <person name="White O."/>
            <person name="Alonso J."/>
            <person name="Altafi H."/>
            <person name="Araujo R."/>
            <person name="Bowman C.L."/>
            <person name="Brooks S.Y."/>
            <person name="Buehler E."/>
            <person name="Chan A."/>
            <person name="Chao Q."/>
            <person name="Chen H."/>
            <person name="Cheuk R.F."/>
            <person name="Chin C.W."/>
            <person name="Chung M.K."/>
            <person name="Conn L."/>
            <person name="Conway A.B."/>
            <person name="Conway A.R."/>
            <person name="Creasy T.H."/>
            <person name="Dewar K."/>
            <person name="Dunn P."/>
            <person name="Etgu P."/>
            <person name="Feldblyum T.V."/>
            <person name="Feng J.-D."/>
            <person name="Fong B."/>
            <person name="Fujii C.Y."/>
            <person name="Gill J.E."/>
            <person name="Goldsmith A.D."/>
            <person name="Haas B."/>
            <person name="Hansen N.F."/>
            <person name="Hughes B."/>
            <person name="Huizar L."/>
            <person name="Hunter J.L."/>
            <person name="Jenkins J."/>
            <person name="Johnson-Hopson C."/>
            <person name="Khan S."/>
            <person name="Khaykin E."/>
            <person name="Kim C.J."/>
            <person name="Koo H.L."/>
            <person name="Kremenetskaia I."/>
            <person name="Kurtz D.B."/>
            <person name="Kwan A."/>
            <person name="Lam B."/>
            <person name="Langin-Hooper S."/>
            <person name="Lee A."/>
            <person name="Lee J.M."/>
            <person name="Lenz C.A."/>
            <person name="Li J.H."/>
            <person name="Li Y.-P."/>
            <person name="Lin X."/>
            <person name="Liu S.X."/>
            <person name="Liu Z.A."/>
            <person name="Luros J.S."/>
            <person name="Maiti R."/>
            <person name="Marziali A."/>
            <person name="Militscher J."/>
            <person name="Miranda M."/>
            <person name="Nguyen M."/>
            <person name="Nierman W.C."/>
            <person name="Osborne B.I."/>
            <person name="Pai G."/>
            <person name="Peterson J."/>
            <person name="Pham P.K."/>
            <person name="Rizzo M."/>
            <person name="Rooney T."/>
            <person name="Rowley D."/>
            <person name="Sakano H."/>
            <person name="Salzberg S.L."/>
            <person name="Schwartz J.R."/>
            <person name="Shinn P."/>
            <person name="Southwick A.M."/>
            <person name="Sun H."/>
            <person name="Tallon L.J."/>
            <person name="Tambunga G."/>
            <person name="Toriumi M.J."/>
            <person name="Town C.D."/>
            <person name="Utterback T."/>
            <person name="Van Aken S."/>
            <person name="Vaysberg M."/>
            <person name="Vysotskaia V.S."/>
            <person name="Walker M."/>
            <person name="Wu D."/>
            <person name="Yu G."/>
            <person name="Fraser C.M."/>
            <person name="Venter J.C."/>
            <person name="Davis R.W."/>
        </authorList>
    </citation>
    <scope>NUCLEOTIDE SEQUENCE [LARGE SCALE GENOMIC DNA]</scope>
    <source>
        <strain>cv. Columbia</strain>
    </source>
</reference>
<reference key="2">
    <citation type="journal article" date="2017" name="Plant J.">
        <title>Araport11: a complete reannotation of the Arabidopsis thaliana reference genome.</title>
        <authorList>
            <person name="Cheng C.Y."/>
            <person name="Krishnakumar V."/>
            <person name="Chan A.P."/>
            <person name="Thibaud-Nissen F."/>
            <person name="Schobel S."/>
            <person name="Town C.D."/>
        </authorList>
    </citation>
    <scope>GENOME REANNOTATION</scope>
    <source>
        <strain>cv. Columbia</strain>
    </source>
</reference>
<reference key="3">
    <citation type="journal article" date="2011" name="J. Exp. Bot.">
        <title>The role of DNA helicases and their interaction partners in genome stability and meiotic recombination in plants.</title>
        <authorList>
            <person name="Knoll A."/>
            <person name="Puchta H."/>
        </authorList>
    </citation>
    <scope>REVIEW</scope>
    <scope>IDENTIFICATION</scope>
</reference>
<reference key="4">
    <citation type="journal article" date="2014" name="Plant Cell">
        <title>The Arabidopsis thaliana homolog of the helicase RTEL1 plays multiple roles in preserving genome stability.</title>
        <authorList>
            <person name="Recker J."/>
            <person name="Knoll A."/>
            <person name="Puchta H."/>
        </authorList>
    </citation>
    <scope>FUNCTION</scope>
    <scope>DISRUPTION PHENOTYPE</scope>
</reference>
<reference key="5">
    <citation type="journal article" date="2015" name="Plant Cell">
        <title>Deficiency of the Arabidopsis helicase RTEL1 triggers a SOG1-dependent replication checkpoint in response to DNA cross-links.</title>
        <authorList>
            <person name="Hu Z."/>
            <person name="Cools T."/>
            <person name="Kalhorzadeh P."/>
            <person name="Heyman J."/>
            <person name="De Veylder L."/>
        </authorList>
    </citation>
    <scope>FUNCTION</scope>
    <scope>DISRUPTION PHENOTYPE</scope>
</reference>
<reference key="6">
    <citation type="journal article" date="2016" name="PLoS Genet.">
        <title>The RTR complex partner RMI2 and the DNA helicase RTEL1 are both independently involved in preserving the stability of 45S rDNA repeats in Arabidopsis thaliana.</title>
        <authorList>
            <person name="Roehrig S."/>
            <person name="Schroepfer S."/>
            <person name="Knoll A."/>
            <person name="Puchta H."/>
        </authorList>
    </citation>
    <scope>FUNCTION</scope>
    <scope>DISRUPTION PHENOTYPE</scope>
</reference>